<evidence type="ECO:0000255" key="1">
    <source>
        <dbReference type="HAMAP-Rule" id="MF_00435"/>
    </source>
</evidence>
<evidence type="ECO:0000255" key="2">
    <source>
        <dbReference type="PROSITE-ProRule" id="PRU01197"/>
    </source>
</evidence>
<evidence type="ECO:0000255" key="3">
    <source>
        <dbReference type="PROSITE-ProRule" id="PRU01198"/>
    </source>
</evidence>
<sequence length="333" mass="36479">MANIYYDSDCDLNSLKGKTIAVIGYGSQGHAQAQNMKDSGLKVIIGLKEGSKSIQDAKNAGFEVYSVSEASQKADIIQILAPDTIQADLYKKDIEPNLKKGDALVFSHGFNIHYDFIKPPKEVDVYMVAPKGPGHLVRRVYTEGGGVPCLIAIYQDSSGEAKKRALAHAAGVGGGRAGILETSFREETETDLFGEQVVLCGGLSNLIMAGFETLTEAGYDPEIAYFECLHEVKLITDLIYEGGLARMRFSISDTAEYGDYVSGPRVIDPGVKQRMKEVLNDIQKDKGAKFATNWMAETKAGYPNFKNMRDKNASHPIESVGKKLRSMMKWLSK</sequence>
<dbReference type="EC" id="1.1.1.86" evidence="1"/>
<dbReference type="EMBL" id="AE010300">
    <property type="protein sequence ID" value="AAN51440.2"/>
    <property type="molecule type" value="Genomic_DNA"/>
</dbReference>
<dbReference type="RefSeq" id="NP_714422.2">
    <property type="nucleotide sequence ID" value="NC_004342.2"/>
</dbReference>
<dbReference type="RefSeq" id="WP_001284348.1">
    <property type="nucleotide sequence ID" value="NC_004342.2"/>
</dbReference>
<dbReference type="SMR" id="Q8EYH2"/>
<dbReference type="FunCoup" id="Q8EYH2">
    <property type="interactions" value="468"/>
</dbReference>
<dbReference type="STRING" id="189518.LA_4242"/>
<dbReference type="PaxDb" id="189518-LA_4242"/>
<dbReference type="EnsemblBacteria" id="AAN51440">
    <property type="protein sequence ID" value="AAN51440"/>
    <property type="gene ID" value="LA_4242"/>
</dbReference>
<dbReference type="GeneID" id="61143258"/>
<dbReference type="KEGG" id="lil:LA_4242"/>
<dbReference type="PATRIC" id="fig|189518.3.peg.4215"/>
<dbReference type="HOGENOM" id="CLU_033821_0_1_12"/>
<dbReference type="InParanoid" id="Q8EYH2"/>
<dbReference type="OrthoDB" id="9804088at2"/>
<dbReference type="UniPathway" id="UPA00047">
    <property type="reaction ID" value="UER00056"/>
</dbReference>
<dbReference type="UniPathway" id="UPA00049">
    <property type="reaction ID" value="UER00060"/>
</dbReference>
<dbReference type="Proteomes" id="UP000001408">
    <property type="component" value="Chromosome I"/>
</dbReference>
<dbReference type="GO" id="GO:0005829">
    <property type="term" value="C:cytosol"/>
    <property type="evidence" value="ECO:0000318"/>
    <property type="project" value="GO_Central"/>
</dbReference>
<dbReference type="GO" id="GO:0004455">
    <property type="term" value="F:ketol-acid reductoisomerase activity"/>
    <property type="evidence" value="ECO:0000318"/>
    <property type="project" value="GO_Central"/>
</dbReference>
<dbReference type="GO" id="GO:0000287">
    <property type="term" value="F:magnesium ion binding"/>
    <property type="evidence" value="ECO:0007669"/>
    <property type="project" value="UniProtKB-UniRule"/>
</dbReference>
<dbReference type="GO" id="GO:0050661">
    <property type="term" value="F:NADP binding"/>
    <property type="evidence" value="ECO:0007669"/>
    <property type="project" value="InterPro"/>
</dbReference>
<dbReference type="GO" id="GO:0009097">
    <property type="term" value="P:isoleucine biosynthetic process"/>
    <property type="evidence" value="ECO:0000318"/>
    <property type="project" value="GO_Central"/>
</dbReference>
<dbReference type="GO" id="GO:0009099">
    <property type="term" value="P:L-valine biosynthetic process"/>
    <property type="evidence" value="ECO:0000318"/>
    <property type="project" value="GO_Central"/>
</dbReference>
<dbReference type="FunFam" id="3.40.50.720:FF:000023">
    <property type="entry name" value="Ketol-acid reductoisomerase (NADP(+))"/>
    <property type="match status" value="1"/>
</dbReference>
<dbReference type="Gene3D" id="6.10.240.10">
    <property type="match status" value="1"/>
</dbReference>
<dbReference type="Gene3D" id="3.40.50.720">
    <property type="entry name" value="NAD(P)-binding Rossmann-like Domain"/>
    <property type="match status" value="1"/>
</dbReference>
<dbReference type="HAMAP" id="MF_00435">
    <property type="entry name" value="IlvC"/>
    <property type="match status" value="1"/>
</dbReference>
<dbReference type="InterPro" id="IPR008927">
    <property type="entry name" value="6-PGluconate_DH-like_C_sf"/>
</dbReference>
<dbReference type="InterPro" id="IPR013023">
    <property type="entry name" value="KARI"/>
</dbReference>
<dbReference type="InterPro" id="IPR000506">
    <property type="entry name" value="KARI_C"/>
</dbReference>
<dbReference type="InterPro" id="IPR013116">
    <property type="entry name" value="KARI_N"/>
</dbReference>
<dbReference type="InterPro" id="IPR014359">
    <property type="entry name" value="KARI_prok"/>
</dbReference>
<dbReference type="InterPro" id="IPR036291">
    <property type="entry name" value="NAD(P)-bd_dom_sf"/>
</dbReference>
<dbReference type="NCBIfam" id="TIGR00465">
    <property type="entry name" value="ilvC"/>
    <property type="match status" value="1"/>
</dbReference>
<dbReference type="NCBIfam" id="NF004017">
    <property type="entry name" value="PRK05479.1"/>
    <property type="match status" value="1"/>
</dbReference>
<dbReference type="NCBIfam" id="NF009940">
    <property type="entry name" value="PRK13403.1"/>
    <property type="match status" value="1"/>
</dbReference>
<dbReference type="PANTHER" id="PTHR21371">
    <property type="entry name" value="KETOL-ACID REDUCTOISOMERASE, MITOCHONDRIAL"/>
    <property type="match status" value="1"/>
</dbReference>
<dbReference type="PANTHER" id="PTHR21371:SF1">
    <property type="entry name" value="KETOL-ACID REDUCTOISOMERASE, MITOCHONDRIAL"/>
    <property type="match status" value="1"/>
</dbReference>
<dbReference type="Pfam" id="PF01450">
    <property type="entry name" value="KARI_C"/>
    <property type="match status" value="1"/>
</dbReference>
<dbReference type="Pfam" id="PF07991">
    <property type="entry name" value="KARI_N"/>
    <property type="match status" value="1"/>
</dbReference>
<dbReference type="PIRSF" id="PIRSF000116">
    <property type="entry name" value="IlvC_gammaproteo"/>
    <property type="match status" value="1"/>
</dbReference>
<dbReference type="SUPFAM" id="SSF48179">
    <property type="entry name" value="6-phosphogluconate dehydrogenase C-terminal domain-like"/>
    <property type="match status" value="1"/>
</dbReference>
<dbReference type="SUPFAM" id="SSF51735">
    <property type="entry name" value="NAD(P)-binding Rossmann-fold domains"/>
    <property type="match status" value="1"/>
</dbReference>
<dbReference type="PROSITE" id="PS51851">
    <property type="entry name" value="KARI_C"/>
    <property type="match status" value="1"/>
</dbReference>
<dbReference type="PROSITE" id="PS51850">
    <property type="entry name" value="KARI_N"/>
    <property type="match status" value="1"/>
</dbReference>
<gene>
    <name evidence="1" type="primary">ilvC</name>
    <name type="ordered locus">LA_4242</name>
</gene>
<name>ILVC_LEPIN</name>
<organism>
    <name type="scientific">Leptospira interrogans serogroup Icterohaemorrhagiae serovar Lai (strain 56601)</name>
    <dbReference type="NCBI Taxonomy" id="189518"/>
    <lineage>
        <taxon>Bacteria</taxon>
        <taxon>Pseudomonadati</taxon>
        <taxon>Spirochaetota</taxon>
        <taxon>Spirochaetia</taxon>
        <taxon>Leptospirales</taxon>
        <taxon>Leptospiraceae</taxon>
        <taxon>Leptospira</taxon>
    </lineage>
</organism>
<feature type="chain" id="PRO_0000151321" description="Ketol-acid reductoisomerase (NADP(+))">
    <location>
        <begin position="1"/>
        <end position="333"/>
    </location>
</feature>
<feature type="domain" description="KARI N-terminal Rossmann" evidence="2">
    <location>
        <begin position="2"/>
        <end position="182"/>
    </location>
</feature>
<feature type="domain" description="KARI C-terminal knotted" evidence="3">
    <location>
        <begin position="183"/>
        <end position="331"/>
    </location>
</feature>
<feature type="active site" evidence="1">
    <location>
        <position position="108"/>
    </location>
</feature>
<feature type="binding site" evidence="1">
    <location>
        <begin position="25"/>
        <end position="28"/>
    </location>
    <ligand>
        <name>NADP(+)</name>
        <dbReference type="ChEBI" id="CHEBI:58349"/>
    </ligand>
</feature>
<feature type="binding site" evidence="1">
    <location>
        <position position="48"/>
    </location>
    <ligand>
        <name>NADP(+)</name>
        <dbReference type="ChEBI" id="CHEBI:58349"/>
    </ligand>
</feature>
<feature type="binding site" evidence="1">
    <location>
        <position position="51"/>
    </location>
    <ligand>
        <name>NADP(+)</name>
        <dbReference type="ChEBI" id="CHEBI:58349"/>
    </ligand>
</feature>
<feature type="binding site" evidence="1">
    <location>
        <position position="53"/>
    </location>
    <ligand>
        <name>NADP(+)</name>
        <dbReference type="ChEBI" id="CHEBI:58349"/>
    </ligand>
</feature>
<feature type="binding site" evidence="1">
    <location>
        <begin position="83"/>
        <end position="86"/>
    </location>
    <ligand>
        <name>NADP(+)</name>
        <dbReference type="ChEBI" id="CHEBI:58349"/>
    </ligand>
</feature>
<feature type="binding site" evidence="1">
    <location>
        <position position="134"/>
    </location>
    <ligand>
        <name>NADP(+)</name>
        <dbReference type="ChEBI" id="CHEBI:58349"/>
    </ligand>
</feature>
<feature type="binding site" evidence="1">
    <location>
        <position position="191"/>
    </location>
    <ligand>
        <name>Mg(2+)</name>
        <dbReference type="ChEBI" id="CHEBI:18420"/>
        <label>1</label>
    </ligand>
</feature>
<feature type="binding site" evidence="1">
    <location>
        <position position="191"/>
    </location>
    <ligand>
        <name>Mg(2+)</name>
        <dbReference type="ChEBI" id="CHEBI:18420"/>
        <label>2</label>
    </ligand>
</feature>
<feature type="binding site" evidence="1">
    <location>
        <position position="195"/>
    </location>
    <ligand>
        <name>Mg(2+)</name>
        <dbReference type="ChEBI" id="CHEBI:18420"/>
        <label>1</label>
    </ligand>
</feature>
<feature type="binding site" evidence="1">
    <location>
        <position position="227"/>
    </location>
    <ligand>
        <name>Mg(2+)</name>
        <dbReference type="ChEBI" id="CHEBI:18420"/>
        <label>2</label>
    </ligand>
</feature>
<feature type="binding site" evidence="1">
    <location>
        <position position="231"/>
    </location>
    <ligand>
        <name>Mg(2+)</name>
        <dbReference type="ChEBI" id="CHEBI:18420"/>
        <label>2</label>
    </ligand>
</feature>
<feature type="binding site" evidence="1">
    <location>
        <position position="252"/>
    </location>
    <ligand>
        <name>substrate</name>
    </ligand>
</feature>
<protein>
    <recommendedName>
        <fullName evidence="1">Ketol-acid reductoisomerase (NADP(+))</fullName>
        <shortName evidence="1">KARI</shortName>
        <ecNumber evidence="1">1.1.1.86</ecNumber>
    </recommendedName>
    <alternativeName>
        <fullName evidence="1">Acetohydroxy-acid isomeroreductase</fullName>
        <shortName evidence="1">AHIR</shortName>
    </alternativeName>
    <alternativeName>
        <fullName evidence="1">Alpha-keto-beta-hydroxylacyl reductoisomerase</fullName>
    </alternativeName>
    <alternativeName>
        <fullName evidence="1">Ketol-acid reductoisomerase type 1</fullName>
    </alternativeName>
    <alternativeName>
        <fullName evidence="1">Ketol-acid reductoisomerase type I</fullName>
    </alternativeName>
</protein>
<keyword id="KW-0028">Amino-acid biosynthesis</keyword>
<keyword id="KW-0100">Branched-chain amino acid biosynthesis</keyword>
<keyword id="KW-0460">Magnesium</keyword>
<keyword id="KW-0479">Metal-binding</keyword>
<keyword id="KW-0521">NADP</keyword>
<keyword id="KW-0560">Oxidoreductase</keyword>
<keyword id="KW-1185">Reference proteome</keyword>
<accession>Q8EYH2</accession>
<proteinExistence type="inferred from homology"/>
<reference key="1">
    <citation type="journal article" date="2003" name="Nature">
        <title>Unique physiological and pathogenic features of Leptospira interrogans revealed by whole-genome sequencing.</title>
        <authorList>
            <person name="Ren S.-X."/>
            <person name="Fu G."/>
            <person name="Jiang X.-G."/>
            <person name="Zeng R."/>
            <person name="Miao Y.-G."/>
            <person name="Xu H."/>
            <person name="Zhang Y.-X."/>
            <person name="Xiong H."/>
            <person name="Lu G."/>
            <person name="Lu L.-F."/>
            <person name="Jiang H.-Q."/>
            <person name="Jia J."/>
            <person name="Tu Y.-F."/>
            <person name="Jiang J.-X."/>
            <person name="Gu W.-Y."/>
            <person name="Zhang Y.-Q."/>
            <person name="Cai Z."/>
            <person name="Sheng H.-H."/>
            <person name="Yin H.-F."/>
            <person name="Zhang Y."/>
            <person name="Zhu G.-F."/>
            <person name="Wan M."/>
            <person name="Huang H.-L."/>
            <person name="Qian Z."/>
            <person name="Wang S.-Y."/>
            <person name="Ma W."/>
            <person name="Yao Z.-J."/>
            <person name="Shen Y."/>
            <person name="Qiang B.-Q."/>
            <person name="Xia Q.-C."/>
            <person name="Guo X.-K."/>
            <person name="Danchin A."/>
            <person name="Saint Girons I."/>
            <person name="Somerville R.L."/>
            <person name="Wen Y.-M."/>
            <person name="Shi M.-H."/>
            <person name="Chen Z."/>
            <person name="Xu J.-G."/>
            <person name="Zhao G.-P."/>
        </authorList>
    </citation>
    <scope>NUCLEOTIDE SEQUENCE [LARGE SCALE GENOMIC DNA]</scope>
    <source>
        <strain>56601</strain>
    </source>
</reference>
<comment type="function">
    <text evidence="1">Involved in the biosynthesis of branched-chain amino acids (BCAA). Catalyzes an alkyl-migration followed by a ketol-acid reduction of (S)-2-acetolactate (S2AL) to yield (R)-2,3-dihydroxy-isovalerate. In the isomerase reaction, S2AL is rearranged via a Mg-dependent methyl migration to produce 3-hydroxy-3-methyl-2-ketobutyrate (HMKB). In the reductase reaction, this 2-ketoacid undergoes a metal-dependent reduction by NADPH to yield (R)-2,3-dihydroxy-isovalerate.</text>
</comment>
<comment type="catalytic activity">
    <reaction evidence="1">
        <text>(2R)-2,3-dihydroxy-3-methylbutanoate + NADP(+) = (2S)-2-acetolactate + NADPH + H(+)</text>
        <dbReference type="Rhea" id="RHEA:22068"/>
        <dbReference type="ChEBI" id="CHEBI:15378"/>
        <dbReference type="ChEBI" id="CHEBI:49072"/>
        <dbReference type="ChEBI" id="CHEBI:57783"/>
        <dbReference type="ChEBI" id="CHEBI:58349"/>
        <dbReference type="ChEBI" id="CHEBI:58476"/>
        <dbReference type="EC" id="1.1.1.86"/>
    </reaction>
</comment>
<comment type="catalytic activity">
    <reaction evidence="1">
        <text>(2R,3R)-2,3-dihydroxy-3-methylpentanoate + NADP(+) = (S)-2-ethyl-2-hydroxy-3-oxobutanoate + NADPH + H(+)</text>
        <dbReference type="Rhea" id="RHEA:13493"/>
        <dbReference type="ChEBI" id="CHEBI:15378"/>
        <dbReference type="ChEBI" id="CHEBI:49256"/>
        <dbReference type="ChEBI" id="CHEBI:49258"/>
        <dbReference type="ChEBI" id="CHEBI:57783"/>
        <dbReference type="ChEBI" id="CHEBI:58349"/>
        <dbReference type="EC" id="1.1.1.86"/>
    </reaction>
</comment>
<comment type="cofactor">
    <cofactor evidence="1">
        <name>Mg(2+)</name>
        <dbReference type="ChEBI" id="CHEBI:18420"/>
    </cofactor>
    <text evidence="1">Binds 2 magnesium ions per subunit.</text>
</comment>
<comment type="pathway">
    <text evidence="1">Amino-acid biosynthesis; L-isoleucine biosynthesis; L-isoleucine from 2-oxobutanoate: step 2/4.</text>
</comment>
<comment type="pathway">
    <text evidence="1">Amino-acid biosynthesis; L-valine biosynthesis; L-valine from pyruvate: step 2/4.</text>
</comment>
<comment type="similarity">
    <text evidence="1">Belongs to the ketol-acid reductoisomerase family.</text>
</comment>